<reference key="1">
    <citation type="submission" date="2006-03" db="EMBL/GenBank/DDBJ databases">
        <title>Complete sequence of chromosome of Psychrobacter cryohalolentis K5.</title>
        <authorList>
            <consortium name="US DOE Joint Genome Institute"/>
            <person name="Copeland A."/>
            <person name="Lucas S."/>
            <person name="Lapidus A."/>
            <person name="Barry K."/>
            <person name="Detter J.C."/>
            <person name="Glavina T."/>
            <person name="Hammon N."/>
            <person name="Israni S."/>
            <person name="Dalin E."/>
            <person name="Tice H."/>
            <person name="Pitluck S."/>
            <person name="Brettin T."/>
            <person name="Bruce D."/>
            <person name="Han C."/>
            <person name="Tapia R."/>
            <person name="Sims D.R."/>
            <person name="Gilna P."/>
            <person name="Schmutz J."/>
            <person name="Larimer F."/>
            <person name="Land M."/>
            <person name="Hauser L."/>
            <person name="Kyrpides N."/>
            <person name="Kim E."/>
            <person name="Richardson P."/>
        </authorList>
    </citation>
    <scope>NUCLEOTIDE SEQUENCE [LARGE SCALE GENOMIC DNA]</scope>
    <source>
        <strain>ATCC BAA-1226 / DSM 17306 / VKM B-2378 / K5</strain>
    </source>
</reference>
<feature type="chain" id="PRO_1000015411" description="Large-conductance mechanosensitive channel">
    <location>
        <begin position="1"/>
        <end position="149"/>
    </location>
</feature>
<feature type="transmembrane region" description="Helical" evidence="1">
    <location>
        <begin position="10"/>
        <end position="30"/>
    </location>
</feature>
<feature type="transmembrane region" description="Helical" evidence="1">
    <location>
        <begin position="41"/>
        <end position="61"/>
    </location>
</feature>
<feature type="transmembrane region" description="Helical" evidence="1">
    <location>
        <begin position="87"/>
        <end position="107"/>
    </location>
</feature>
<evidence type="ECO:0000255" key="1">
    <source>
        <dbReference type="HAMAP-Rule" id="MF_00115"/>
    </source>
</evidence>
<organism>
    <name type="scientific">Psychrobacter cryohalolentis (strain ATCC BAA-1226 / DSM 17306 / VKM B-2378 / K5)</name>
    <dbReference type="NCBI Taxonomy" id="335284"/>
    <lineage>
        <taxon>Bacteria</taxon>
        <taxon>Pseudomonadati</taxon>
        <taxon>Pseudomonadota</taxon>
        <taxon>Gammaproteobacteria</taxon>
        <taxon>Moraxellales</taxon>
        <taxon>Moraxellaceae</taxon>
        <taxon>Psychrobacter</taxon>
    </lineage>
</organism>
<protein>
    <recommendedName>
        <fullName evidence="1">Large-conductance mechanosensitive channel</fullName>
    </recommendedName>
</protein>
<name>MSCL_PSYCK</name>
<accession>Q1QDU6</accession>
<comment type="function">
    <text evidence="1">Channel that opens in response to stretch forces in the membrane lipid bilayer. May participate in the regulation of osmotic pressure changes within the cell.</text>
</comment>
<comment type="subunit">
    <text evidence="1">Homopentamer.</text>
</comment>
<comment type="subcellular location">
    <subcellularLocation>
        <location evidence="1">Cell inner membrane</location>
        <topology evidence="1">Multi-pass membrane protein</topology>
    </subcellularLocation>
</comment>
<comment type="similarity">
    <text evidence="1">Belongs to the MscL family.</text>
</comment>
<proteinExistence type="inferred from homology"/>
<gene>
    <name evidence="1" type="primary">mscL</name>
    <name type="ordered locus">Pcryo_0374</name>
</gene>
<sequence length="149" mass="16250">MSMVSEFKEFALKGNVMDLAVGVIIGGAFATITKSLVEDVIMPIVAFIVGGEINFKNMFLILGDAPEGVARTNDALKAAGIPVLAYGSFITVLINFLILAFIIFMMVKMVNRLRRADEVEEAIEEAIEEPSEEVQLLREISAKLGNINK</sequence>
<keyword id="KW-0997">Cell inner membrane</keyword>
<keyword id="KW-1003">Cell membrane</keyword>
<keyword id="KW-0407">Ion channel</keyword>
<keyword id="KW-0406">Ion transport</keyword>
<keyword id="KW-0472">Membrane</keyword>
<keyword id="KW-0812">Transmembrane</keyword>
<keyword id="KW-1133">Transmembrane helix</keyword>
<keyword id="KW-0813">Transport</keyword>
<dbReference type="EMBL" id="CP000323">
    <property type="protein sequence ID" value="ABE74157.1"/>
    <property type="molecule type" value="Genomic_DNA"/>
</dbReference>
<dbReference type="RefSeq" id="WP_011512743.1">
    <property type="nucleotide sequence ID" value="NC_007969.1"/>
</dbReference>
<dbReference type="SMR" id="Q1QDU6"/>
<dbReference type="STRING" id="335284.Pcryo_0374"/>
<dbReference type="KEGG" id="pcr:Pcryo_0374"/>
<dbReference type="eggNOG" id="COG1970">
    <property type="taxonomic scope" value="Bacteria"/>
</dbReference>
<dbReference type="HOGENOM" id="CLU_095787_0_1_6"/>
<dbReference type="Proteomes" id="UP000002425">
    <property type="component" value="Chromosome"/>
</dbReference>
<dbReference type="GO" id="GO:0005886">
    <property type="term" value="C:plasma membrane"/>
    <property type="evidence" value="ECO:0007669"/>
    <property type="project" value="UniProtKB-SubCell"/>
</dbReference>
<dbReference type="GO" id="GO:0008381">
    <property type="term" value="F:mechanosensitive monoatomic ion channel activity"/>
    <property type="evidence" value="ECO:0007669"/>
    <property type="project" value="UniProtKB-UniRule"/>
</dbReference>
<dbReference type="Gene3D" id="1.10.1200.120">
    <property type="entry name" value="Large-conductance mechanosensitive channel, MscL, domain 1"/>
    <property type="match status" value="1"/>
</dbReference>
<dbReference type="HAMAP" id="MF_00115">
    <property type="entry name" value="MscL"/>
    <property type="match status" value="1"/>
</dbReference>
<dbReference type="InterPro" id="IPR019823">
    <property type="entry name" value="Mechanosensitive_channel_CS"/>
</dbReference>
<dbReference type="InterPro" id="IPR001185">
    <property type="entry name" value="MS_channel"/>
</dbReference>
<dbReference type="InterPro" id="IPR037673">
    <property type="entry name" value="MSC/AndL"/>
</dbReference>
<dbReference type="InterPro" id="IPR036019">
    <property type="entry name" value="MscL_channel"/>
</dbReference>
<dbReference type="NCBIfam" id="TIGR00220">
    <property type="entry name" value="mscL"/>
    <property type="match status" value="1"/>
</dbReference>
<dbReference type="NCBIfam" id="NF010557">
    <property type="entry name" value="PRK13952.1"/>
    <property type="match status" value="1"/>
</dbReference>
<dbReference type="PANTHER" id="PTHR30266:SF2">
    <property type="entry name" value="LARGE-CONDUCTANCE MECHANOSENSITIVE CHANNEL"/>
    <property type="match status" value="1"/>
</dbReference>
<dbReference type="PANTHER" id="PTHR30266">
    <property type="entry name" value="MECHANOSENSITIVE CHANNEL MSCL"/>
    <property type="match status" value="1"/>
</dbReference>
<dbReference type="Pfam" id="PF01741">
    <property type="entry name" value="MscL"/>
    <property type="match status" value="1"/>
</dbReference>
<dbReference type="PRINTS" id="PR01264">
    <property type="entry name" value="MECHCHANNEL"/>
</dbReference>
<dbReference type="SUPFAM" id="SSF81330">
    <property type="entry name" value="Gated mechanosensitive channel"/>
    <property type="match status" value="1"/>
</dbReference>
<dbReference type="PROSITE" id="PS01327">
    <property type="entry name" value="MSCL"/>
    <property type="match status" value="1"/>
</dbReference>